<protein>
    <recommendedName>
        <fullName evidence="1">D-erythrose-4-phosphate dehydrogenase</fullName>
        <shortName evidence="1">E4PDH</shortName>
        <ecNumber evidence="1">1.2.1.72</ecNumber>
    </recommendedName>
</protein>
<comment type="function">
    <text evidence="1">Catalyzes the NAD-dependent conversion of D-erythrose 4-phosphate to 4-phosphoerythronate.</text>
</comment>
<comment type="catalytic activity">
    <reaction evidence="1">
        <text>D-erythrose 4-phosphate + NAD(+) + H2O = 4-phospho-D-erythronate + NADH + 2 H(+)</text>
        <dbReference type="Rhea" id="RHEA:12056"/>
        <dbReference type="ChEBI" id="CHEBI:15377"/>
        <dbReference type="ChEBI" id="CHEBI:15378"/>
        <dbReference type="ChEBI" id="CHEBI:16897"/>
        <dbReference type="ChEBI" id="CHEBI:57540"/>
        <dbReference type="ChEBI" id="CHEBI:57945"/>
        <dbReference type="ChEBI" id="CHEBI:58766"/>
        <dbReference type="EC" id="1.2.1.72"/>
    </reaction>
</comment>
<comment type="pathway">
    <text evidence="1">Cofactor biosynthesis; pyridoxine 5'-phosphate biosynthesis; pyridoxine 5'-phosphate from D-erythrose 4-phosphate: step 1/5.</text>
</comment>
<comment type="subunit">
    <text evidence="1">Homotetramer.</text>
</comment>
<comment type="subcellular location">
    <subcellularLocation>
        <location evidence="1">Cytoplasm</location>
    </subcellularLocation>
</comment>
<comment type="similarity">
    <text evidence="1">Belongs to the glyceraldehyde-3-phosphate dehydrogenase family. Epd subfamily.</text>
</comment>
<evidence type="ECO:0000255" key="1">
    <source>
        <dbReference type="HAMAP-Rule" id="MF_01640"/>
    </source>
</evidence>
<accession>B5RE31</accession>
<feature type="chain" id="PRO_1000186835" description="D-erythrose-4-phosphate dehydrogenase">
    <location>
        <begin position="1"/>
        <end position="348"/>
    </location>
</feature>
<feature type="active site" description="Nucleophile" evidence="1">
    <location>
        <position position="155"/>
    </location>
</feature>
<feature type="binding site" evidence="1">
    <location>
        <begin position="12"/>
        <end position="13"/>
    </location>
    <ligand>
        <name>NAD(+)</name>
        <dbReference type="ChEBI" id="CHEBI:57540"/>
    </ligand>
</feature>
<feature type="binding site" evidence="1">
    <location>
        <position position="81"/>
    </location>
    <ligand>
        <name>NAD(+)</name>
        <dbReference type="ChEBI" id="CHEBI:57540"/>
    </ligand>
</feature>
<feature type="binding site" evidence="1">
    <location>
        <begin position="154"/>
        <end position="156"/>
    </location>
    <ligand>
        <name>substrate</name>
    </ligand>
</feature>
<feature type="binding site" evidence="1">
    <location>
        <position position="200"/>
    </location>
    <ligand>
        <name>substrate</name>
    </ligand>
</feature>
<feature type="binding site" evidence="1">
    <location>
        <begin position="213"/>
        <end position="214"/>
    </location>
    <ligand>
        <name>substrate</name>
    </ligand>
</feature>
<feature type="binding site" evidence="1">
    <location>
        <position position="236"/>
    </location>
    <ligand>
        <name>substrate</name>
    </ligand>
</feature>
<feature type="binding site" evidence="1">
    <location>
        <position position="318"/>
    </location>
    <ligand>
        <name>NAD(+)</name>
        <dbReference type="ChEBI" id="CHEBI:57540"/>
    </ligand>
</feature>
<feature type="site" description="Activates thiol group during catalysis" evidence="1">
    <location>
        <position position="182"/>
    </location>
</feature>
<reference key="1">
    <citation type="journal article" date="2008" name="Genome Res.">
        <title>Comparative genome analysis of Salmonella enteritidis PT4 and Salmonella gallinarum 287/91 provides insights into evolutionary and host adaptation pathways.</title>
        <authorList>
            <person name="Thomson N.R."/>
            <person name="Clayton D.J."/>
            <person name="Windhorst D."/>
            <person name="Vernikos G."/>
            <person name="Davidson S."/>
            <person name="Churcher C."/>
            <person name="Quail M.A."/>
            <person name="Stevens M."/>
            <person name="Jones M.A."/>
            <person name="Watson M."/>
            <person name="Barron A."/>
            <person name="Layton A."/>
            <person name="Pickard D."/>
            <person name="Kingsley R.A."/>
            <person name="Bignell A."/>
            <person name="Clark L."/>
            <person name="Harris B."/>
            <person name="Ormond D."/>
            <person name="Abdellah Z."/>
            <person name="Brooks K."/>
            <person name="Cherevach I."/>
            <person name="Chillingworth T."/>
            <person name="Woodward J."/>
            <person name="Norberczak H."/>
            <person name="Lord A."/>
            <person name="Arrowsmith C."/>
            <person name="Jagels K."/>
            <person name="Moule S."/>
            <person name="Mungall K."/>
            <person name="Saunders M."/>
            <person name="Whitehead S."/>
            <person name="Chabalgoity J.A."/>
            <person name="Maskell D."/>
            <person name="Humphreys T."/>
            <person name="Roberts M."/>
            <person name="Barrow P.A."/>
            <person name="Dougan G."/>
            <person name="Parkhill J."/>
        </authorList>
    </citation>
    <scope>NUCLEOTIDE SEQUENCE [LARGE SCALE GENOMIC DNA]</scope>
    <source>
        <strain>287/91 / NCTC 13346</strain>
    </source>
</reference>
<name>E4PD_SALG2</name>
<keyword id="KW-0963">Cytoplasm</keyword>
<keyword id="KW-0520">NAD</keyword>
<keyword id="KW-0560">Oxidoreductase</keyword>
<keyword id="KW-0664">Pyridoxine biosynthesis</keyword>
<gene>
    <name evidence="1" type="primary">epd</name>
    <name type="ordered locus">SG2965</name>
</gene>
<dbReference type="EC" id="1.2.1.72" evidence="1"/>
<dbReference type="EMBL" id="AM933173">
    <property type="protein sequence ID" value="CAR38770.1"/>
    <property type="molecule type" value="Genomic_DNA"/>
</dbReference>
<dbReference type="RefSeq" id="WP_000218343.1">
    <property type="nucleotide sequence ID" value="NC_011274.1"/>
</dbReference>
<dbReference type="SMR" id="B5RE31"/>
<dbReference type="KEGG" id="seg:SG2965"/>
<dbReference type="HOGENOM" id="CLU_030140_0_0_6"/>
<dbReference type="UniPathway" id="UPA00244">
    <property type="reaction ID" value="UER00309"/>
</dbReference>
<dbReference type="Proteomes" id="UP000008321">
    <property type="component" value="Chromosome"/>
</dbReference>
<dbReference type="GO" id="GO:0005737">
    <property type="term" value="C:cytoplasm"/>
    <property type="evidence" value="ECO:0007669"/>
    <property type="project" value="UniProtKB-SubCell"/>
</dbReference>
<dbReference type="GO" id="GO:0048001">
    <property type="term" value="F:erythrose-4-phosphate dehydrogenase activity"/>
    <property type="evidence" value="ECO:0007669"/>
    <property type="project" value="UniProtKB-UniRule"/>
</dbReference>
<dbReference type="GO" id="GO:0051287">
    <property type="term" value="F:NAD binding"/>
    <property type="evidence" value="ECO:0007669"/>
    <property type="project" value="InterPro"/>
</dbReference>
<dbReference type="GO" id="GO:0050661">
    <property type="term" value="F:NADP binding"/>
    <property type="evidence" value="ECO:0007669"/>
    <property type="project" value="InterPro"/>
</dbReference>
<dbReference type="GO" id="GO:0006006">
    <property type="term" value="P:glucose metabolic process"/>
    <property type="evidence" value="ECO:0007669"/>
    <property type="project" value="InterPro"/>
</dbReference>
<dbReference type="GO" id="GO:0042823">
    <property type="term" value="P:pyridoxal phosphate biosynthetic process"/>
    <property type="evidence" value="ECO:0007669"/>
    <property type="project" value="UniProtKB-UniRule"/>
</dbReference>
<dbReference type="GO" id="GO:0008615">
    <property type="term" value="P:pyridoxine biosynthetic process"/>
    <property type="evidence" value="ECO:0007669"/>
    <property type="project" value="UniProtKB-UniRule"/>
</dbReference>
<dbReference type="CDD" id="cd23937">
    <property type="entry name" value="GAPDH_C_E4PDH"/>
    <property type="match status" value="1"/>
</dbReference>
<dbReference type="CDD" id="cd17892">
    <property type="entry name" value="GAPDH_N_E4PDH"/>
    <property type="match status" value="1"/>
</dbReference>
<dbReference type="FunFam" id="3.30.360.10:FF:000007">
    <property type="entry name" value="D-erythrose-4-phosphate dehydrogenase"/>
    <property type="match status" value="1"/>
</dbReference>
<dbReference type="FunFam" id="3.40.50.720:FF:000001">
    <property type="entry name" value="Glyceraldehyde-3-phosphate dehydrogenase"/>
    <property type="match status" value="1"/>
</dbReference>
<dbReference type="Gene3D" id="3.30.360.10">
    <property type="entry name" value="Dihydrodipicolinate Reductase, domain 2"/>
    <property type="match status" value="1"/>
</dbReference>
<dbReference type="Gene3D" id="3.40.50.720">
    <property type="entry name" value="NAD(P)-binding Rossmann-like Domain"/>
    <property type="match status" value="1"/>
</dbReference>
<dbReference type="HAMAP" id="MF_01640">
    <property type="entry name" value="E4P_dehydrog"/>
    <property type="match status" value="1"/>
</dbReference>
<dbReference type="InterPro" id="IPR006422">
    <property type="entry name" value="E4P_DH_bac"/>
</dbReference>
<dbReference type="InterPro" id="IPR020831">
    <property type="entry name" value="GlycerAld/Erythrose_P_DH"/>
</dbReference>
<dbReference type="InterPro" id="IPR020830">
    <property type="entry name" value="GlycerAld_3-P_DH_AS"/>
</dbReference>
<dbReference type="InterPro" id="IPR020829">
    <property type="entry name" value="GlycerAld_3-P_DH_cat"/>
</dbReference>
<dbReference type="InterPro" id="IPR020828">
    <property type="entry name" value="GlycerAld_3-P_DH_NAD(P)-bd"/>
</dbReference>
<dbReference type="InterPro" id="IPR006424">
    <property type="entry name" value="Glyceraldehyde-3-P_DH_1"/>
</dbReference>
<dbReference type="InterPro" id="IPR036291">
    <property type="entry name" value="NAD(P)-bd_dom_sf"/>
</dbReference>
<dbReference type="NCBIfam" id="TIGR01532">
    <property type="entry name" value="E4PD_g-proteo"/>
    <property type="match status" value="1"/>
</dbReference>
<dbReference type="NCBIfam" id="TIGR01534">
    <property type="entry name" value="GAPDH-I"/>
    <property type="match status" value="1"/>
</dbReference>
<dbReference type="NCBIfam" id="NF010058">
    <property type="entry name" value="PRK13535.1"/>
    <property type="match status" value="1"/>
</dbReference>
<dbReference type="PANTHER" id="PTHR43148">
    <property type="entry name" value="GLYCERALDEHYDE-3-PHOSPHATE DEHYDROGENASE 2"/>
    <property type="match status" value="1"/>
</dbReference>
<dbReference type="Pfam" id="PF02800">
    <property type="entry name" value="Gp_dh_C"/>
    <property type="match status" value="1"/>
</dbReference>
<dbReference type="Pfam" id="PF00044">
    <property type="entry name" value="Gp_dh_N"/>
    <property type="match status" value="1"/>
</dbReference>
<dbReference type="PIRSF" id="PIRSF000149">
    <property type="entry name" value="GAP_DH"/>
    <property type="match status" value="1"/>
</dbReference>
<dbReference type="PRINTS" id="PR00078">
    <property type="entry name" value="G3PDHDRGNASE"/>
</dbReference>
<dbReference type="SMART" id="SM00846">
    <property type="entry name" value="Gp_dh_N"/>
    <property type="match status" value="1"/>
</dbReference>
<dbReference type="SUPFAM" id="SSF55347">
    <property type="entry name" value="Glyceraldehyde-3-phosphate dehydrogenase-like, C-terminal domain"/>
    <property type="match status" value="1"/>
</dbReference>
<dbReference type="SUPFAM" id="SSF51735">
    <property type="entry name" value="NAD(P)-binding Rossmann-fold domains"/>
    <property type="match status" value="1"/>
</dbReference>
<dbReference type="PROSITE" id="PS00071">
    <property type="entry name" value="GAPDH"/>
    <property type="match status" value="1"/>
</dbReference>
<proteinExistence type="inferred from homology"/>
<sequence>MTVRIAINGFGRIGRNVVRALYESGRRAEITVVAINELADAAGMAHLLKYDTSHGRFAWEVRHEREQLFVGDDVIRILHERTLADLPWRELGVDVVLDCTGVYGNREHGEAHIAAGAKKVLFSHPGSNGLDATVVFGVNQNELRAEHRIVSNASCTTNCIIPVIKLLDDAYGIESGTVTTIHSAMNDQQVIDAYHSDLRRTRAASQSIIPVDTKLAAGITRIFPQFNDRFEAIAVRVPTINVTAIDLSVTVKKPVKASEVNQLLQKAAQGAFHGIVDYTESPLVSIDFNHDPHSAIVDGTQTRVSGAHLIKTLVWCDNEWGFANRMLDTTLAMAAVGFRLDASASTKL</sequence>
<organism>
    <name type="scientific">Salmonella gallinarum (strain 287/91 / NCTC 13346)</name>
    <dbReference type="NCBI Taxonomy" id="550538"/>
    <lineage>
        <taxon>Bacteria</taxon>
        <taxon>Pseudomonadati</taxon>
        <taxon>Pseudomonadota</taxon>
        <taxon>Gammaproteobacteria</taxon>
        <taxon>Enterobacterales</taxon>
        <taxon>Enterobacteriaceae</taxon>
        <taxon>Salmonella</taxon>
    </lineage>
</organism>